<geneLocation type="chloroplast"/>
<dbReference type="EMBL" id="AJ316582">
    <property type="protein sequence ID" value="CAC88037.1"/>
    <property type="molecule type" value="Genomic_DNA"/>
</dbReference>
<dbReference type="RefSeq" id="NP_783225.1">
    <property type="nucleotide sequence ID" value="NC_004561.1"/>
</dbReference>
<dbReference type="SMR" id="Q7FNT1"/>
<dbReference type="GeneID" id="806548"/>
<dbReference type="GO" id="GO:0009535">
    <property type="term" value="C:chloroplast thylakoid membrane"/>
    <property type="evidence" value="ECO:0007669"/>
    <property type="project" value="UniProtKB-SubCell"/>
</dbReference>
<dbReference type="GO" id="GO:0009512">
    <property type="term" value="C:cytochrome b6f complex"/>
    <property type="evidence" value="ECO:0007669"/>
    <property type="project" value="InterPro"/>
</dbReference>
<dbReference type="GO" id="GO:0045158">
    <property type="term" value="F:electron transporter, transferring electrons within cytochrome b6/f complex of photosystem II activity"/>
    <property type="evidence" value="ECO:0007669"/>
    <property type="project" value="InterPro"/>
</dbReference>
<dbReference type="GO" id="GO:0017004">
    <property type="term" value="P:cytochrome complex assembly"/>
    <property type="evidence" value="ECO:0007669"/>
    <property type="project" value="UniProtKB-UniRule"/>
</dbReference>
<dbReference type="GO" id="GO:0015979">
    <property type="term" value="P:photosynthesis"/>
    <property type="evidence" value="ECO:0007669"/>
    <property type="project" value="UniProtKB-KW"/>
</dbReference>
<dbReference type="HAMAP" id="MF_00395">
    <property type="entry name" value="Cytb6_f_PetN"/>
    <property type="match status" value="1"/>
</dbReference>
<dbReference type="InterPro" id="IPR036143">
    <property type="entry name" value="Cytochr_b6-f_cplx_su8_sf"/>
</dbReference>
<dbReference type="InterPro" id="IPR005497">
    <property type="entry name" value="Cytochrome_b6-f_cplx_su8"/>
</dbReference>
<dbReference type="Pfam" id="PF03742">
    <property type="entry name" value="PetN"/>
    <property type="match status" value="1"/>
</dbReference>
<dbReference type="SUPFAM" id="SSF103451">
    <property type="entry name" value="PetN subunit of the cytochrome b6f complex"/>
    <property type="match status" value="1"/>
</dbReference>
<sequence>MDIVSLAWAALMVVFTFSLSLVVWGRSGL</sequence>
<name>PETN_ATRBE</name>
<organism>
    <name type="scientific">Atropa belladonna</name>
    <name type="common">Belladonna</name>
    <name type="synonym">Deadly nightshade</name>
    <dbReference type="NCBI Taxonomy" id="33113"/>
    <lineage>
        <taxon>Eukaryota</taxon>
        <taxon>Viridiplantae</taxon>
        <taxon>Streptophyta</taxon>
        <taxon>Embryophyta</taxon>
        <taxon>Tracheophyta</taxon>
        <taxon>Spermatophyta</taxon>
        <taxon>Magnoliopsida</taxon>
        <taxon>eudicotyledons</taxon>
        <taxon>Gunneridae</taxon>
        <taxon>Pentapetalae</taxon>
        <taxon>asterids</taxon>
        <taxon>lamiids</taxon>
        <taxon>Solanales</taxon>
        <taxon>Solanaceae</taxon>
        <taxon>Solanoideae</taxon>
        <taxon>Hyoscyameae</taxon>
        <taxon>Atropa</taxon>
    </lineage>
</organism>
<evidence type="ECO:0000255" key="1">
    <source>
        <dbReference type="HAMAP-Rule" id="MF_00395"/>
    </source>
</evidence>
<protein>
    <recommendedName>
        <fullName evidence="1">Cytochrome b6-f complex subunit 8</fullName>
    </recommendedName>
    <alternativeName>
        <fullName evidence="1">Cytochrome b6-f complex subunit PetN</fullName>
    </alternativeName>
    <alternativeName>
        <fullName evidence="1">Cytochrome b6-f complex subunit VIII</fullName>
    </alternativeName>
</protein>
<keyword id="KW-0150">Chloroplast</keyword>
<keyword id="KW-0249">Electron transport</keyword>
<keyword id="KW-0472">Membrane</keyword>
<keyword id="KW-0602">Photosynthesis</keyword>
<keyword id="KW-0934">Plastid</keyword>
<keyword id="KW-0793">Thylakoid</keyword>
<keyword id="KW-0812">Transmembrane</keyword>
<keyword id="KW-1133">Transmembrane helix</keyword>
<keyword id="KW-0813">Transport</keyword>
<accession>Q7FNT1</accession>
<feature type="chain" id="PRO_0000217101" description="Cytochrome b6-f complex subunit 8">
    <location>
        <begin position="1"/>
        <end position="29"/>
    </location>
</feature>
<feature type="transmembrane region" description="Helical" evidence="1">
    <location>
        <begin position="3"/>
        <end position="23"/>
    </location>
</feature>
<comment type="function">
    <text evidence="1">Component of the cytochrome b6-f complex, which mediates electron transfer between photosystem II (PSII) and photosystem I (PSI), cyclic electron flow around PSI, and state transitions.</text>
</comment>
<comment type="subunit">
    <text evidence="1">The 4 large subunits of the cytochrome b6-f complex are cytochrome b6, subunit IV (17 kDa polypeptide, PetD), cytochrome f and the Rieske protein, while the 4 small subunits are PetG, PetL, PetM and PetN. The complex functions as a dimer.</text>
</comment>
<comment type="subcellular location">
    <subcellularLocation>
        <location evidence="1">Plastid</location>
        <location evidence="1">Chloroplast thylakoid membrane</location>
        <topology evidence="1">Single-pass membrane protein</topology>
    </subcellularLocation>
</comment>
<comment type="similarity">
    <text evidence="1">Belongs to the PetN family.</text>
</comment>
<gene>
    <name evidence="1" type="primary">petN</name>
</gene>
<proteinExistence type="inferred from homology"/>
<reference key="1">
    <citation type="journal article" date="2002" name="Mol. Biol. Evol.">
        <title>The plastid chromosome of Atropa belladonna and its comparison with that of Nicotiana tabacum: the role of RNA editing in generating divergence in the process of plant speciation.</title>
        <authorList>
            <person name="Schmitz-Linneweber C."/>
            <person name="Regel R."/>
            <person name="Du T.G."/>
            <person name="Hupfer H."/>
            <person name="Herrmann R.G."/>
            <person name="Maier R.M."/>
        </authorList>
    </citation>
    <scope>NUCLEOTIDE SEQUENCE [LARGE SCALE GENOMIC DNA]</scope>
    <source>
        <strain>cv. Ab5p(kan)</strain>
    </source>
</reference>